<accession>P27743</accession>
<evidence type="ECO:0000250" key="1"/>
<evidence type="ECO:0000255" key="2">
    <source>
        <dbReference type="PROSITE-ProRule" id="PRU00258"/>
    </source>
</evidence>
<evidence type="ECO:0000305" key="3"/>
<feature type="chain" id="PRO_0000193059" description="N-(5-amino-5-carboxypentanoyl)-L-cysteinyl-D-valine synthase">
    <location>
        <begin position="1"/>
        <end position="3649"/>
    </location>
</feature>
<feature type="domain" description="Carrier 1" evidence="2">
    <location>
        <begin position="783"/>
        <end position="860"/>
    </location>
</feature>
<feature type="domain" description="Carrier 2" evidence="2">
    <location>
        <begin position="1859"/>
        <end position="1936"/>
    </location>
</feature>
<feature type="domain" description="Carrier 3" evidence="2">
    <location>
        <begin position="2909"/>
        <end position="2984"/>
    </location>
</feature>
<feature type="region of interest" description="Domain 1 (adipate-activating)">
    <location>
        <begin position="401"/>
        <end position="861"/>
    </location>
</feature>
<feature type="region of interest" description="Domain 2 (cysteine-activating)">
    <location>
        <begin position="1014"/>
        <end position="1937"/>
    </location>
</feature>
<feature type="region of interest" description="Domain 3 (valine-activating)">
    <location>
        <begin position="2079"/>
        <end position="2985"/>
    </location>
</feature>
<feature type="active site" description="For thioesterase activity" evidence="1">
    <location>
        <position position="3502"/>
    </location>
</feature>
<feature type="modified residue" description="O-(pantetheine 4'-phosphoryl)serine" evidence="2">
    <location>
        <position position="820"/>
    </location>
</feature>
<feature type="modified residue" description="O-(pantetheine 4'-phosphoryl)serine" evidence="2">
    <location>
        <position position="1896"/>
    </location>
</feature>
<feature type="modified residue" description="O-(pantetheine 4'-phosphoryl)serine" evidence="2">
    <location>
        <position position="2944"/>
    </location>
</feature>
<reference key="1">
    <citation type="journal article" date="1991" name="Mol. Microbiol.">
        <title>The cephamycin biosynthetic genes pcbAB, encoding a large multidomain peptide synthetase, and pcbC of Nocardia lactamdurans are clustered together in an organization different from the same genes in Acremonium chrysogenum and Penicillium chrysogenum.</title>
        <authorList>
            <person name="Coque J.J.R."/>
            <person name="Martin J.F."/>
            <person name="Calzada J.G."/>
            <person name="Liras P."/>
        </authorList>
    </citation>
    <scope>NUCLEOTIDE SEQUENCE [GENOMIC DNA]</scope>
    <source>
        <strain>VAR LC 411</strain>
    </source>
</reference>
<dbReference type="EC" id="6.3.2.26"/>
<dbReference type="EMBL" id="X57310">
    <property type="protein sequence ID" value="CAA40561.1"/>
    <property type="molecule type" value="Genomic_DNA"/>
</dbReference>
<dbReference type="PIR" id="S18268">
    <property type="entry name" value="S18268"/>
</dbReference>
<dbReference type="SMR" id="P27743"/>
<dbReference type="ESTHER" id="nocla-acvs">
    <property type="family name" value="Thioesterase"/>
</dbReference>
<dbReference type="UniPathway" id="UPA00149">
    <property type="reaction ID" value="UER00239"/>
</dbReference>
<dbReference type="GO" id="GO:0005737">
    <property type="term" value="C:cytoplasm"/>
    <property type="evidence" value="ECO:0007669"/>
    <property type="project" value="TreeGrafter"/>
</dbReference>
<dbReference type="GO" id="GO:0005524">
    <property type="term" value="F:ATP binding"/>
    <property type="evidence" value="ECO:0007669"/>
    <property type="project" value="UniProtKB-KW"/>
</dbReference>
<dbReference type="GO" id="GO:0050564">
    <property type="term" value="F:N-(5-amino-5-carboxypentanoyl)-L-cysteinyl-D-valine synthase activity"/>
    <property type="evidence" value="ECO:0007669"/>
    <property type="project" value="UniProtKB-EC"/>
</dbReference>
<dbReference type="GO" id="GO:0031177">
    <property type="term" value="F:phosphopantetheine binding"/>
    <property type="evidence" value="ECO:0007669"/>
    <property type="project" value="InterPro"/>
</dbReference>
<dbReference type="GO" id="GO:0043041">
    <property type="term" value="P:amino acid activation for nonribosomal peptide biosynthetic process"/>
    <property type="evidence" value="ECO:0007669"/>
    <property type="project" value="TreeGrafter"/>
</dbReference>
<dbReference type="GO" id="GO:0017000">
    <property type="term" value="P:antibiotic biosynthetic process"/>
    <property type="evidence" value="ECO:0007669"/>
    <property type="project" value="UniProtKB-KW"/>
</dbReference>
<dbReference type="GO" id="GO:0008610">
    <property type="term" value="P:lipid biosynthetic process"/>
    <property type="evidence" value="ECO:0007669"/>
    <property type="project" value="UniProtKB-ARBA"/>
</dbReference>
<dbReference type="GO" id="GO:0044550">
    <property type="term" value="P:secondary metabolite biosynthetic process"/>
    <property type="evidence" value="ECO:0007669"/>
    <property type="project" value="TreeGrafter"/>
</dbReference>
<dbReference type="CDD" id="cd17648">
    <property type="entry name" value="A_NRPS_ACVS-like"/>
    <property type="match status" value="2"/>
</dbReference>
<dbReference type="CDD" id="cd19543">
    <property type="entry name" value="DCL_NRPS"/>
    <property type="match status" value="1"/>
</dbReference>
<dbReference type="CDD" id="cd19534">
    <property type="entry name" value="E_NRPS"/>
    <property type="match status" value="1"/>
</dbReference>
<dbReference type="CDD" id="cd19539">
    <property type="entry name" value="SgcC5_NRPS-like"/>
    <property type="match status" value="1"/>
</dbReference>
<dbReference type="FunFam" id="3.40.50.980:FF:000001">
    <property type="entry name" value="Non-ribosomal peptide synthetase"/>
    <property type="match status" value="2"/>
</dbReference>
<dbReference type="FunFam" id="2.30.38.10:FF:000001">
    <property type="entry name" value="Non-ribosomal peptide synthetase PvdI"/>
    <property type="match status" value="1"/>
</dbReference>
<dbReference type="FunFam" id="1.10.1200.10:FF:000005">
    <property type="entry name" value="Nonribosomal peptide synthetase 1"/>
    <property type="match status" value="1"/>
</dbReference>
<dbReference type="Gene3D" id="3.30.300.30">
    <property type="match status" value="3"/>
</dbReference>
<dbReference type="Gene3D" id="3.40.50.980">
    <property type="match status" value="4"/>
</dbReference>
<dbReference type="Gene3D" id="1.10.1200.10">
    <property type="entry name" value="ACP-like"/>
    <property type="match status" value="3"/>
</dbReference>
<dbReference type="Gene3D" id="3.40.50.1820">
    <property type="entry name" value="alpha/beta hydrolase"/>
    <property type="match status" value="1"/>
</dbReference>
<dbReference type="Gene3D" id="3.30.559.10">
    <property type="entry name" value="Chloramphenicol acetyltransferase-like domain"/>
    <property type="match status" value="3"/>
</dbReference>
<dbReference type="Gene3D" id="2.30.38.10">
    <property type="entry name" value="Luciferase, Domain 3"/>
    <property type="match status" value="2"/>
</dbReference>
<dbReference type="Gene3D" id="3.40.50.12780">
    <property type="entry name" value="N-terminal domain of ligase-like"/>
    <property type="match status" value="1"/>
</dbReference>
<dbReference type="Gene3D" id="3.30.559.30">
    <property type="entry name" value="Nonribosomal peptide synthetase, condensation domain"/>
    <property type="match status" value="4"/>
</dbReference>
<dbReference type="InterPro" id="IPR010071">
    <property type="entry name" value="AA_adenyl_dom"/>
</dbReference>
<dbReference type="InterPro" id="IPR029058">
    <property type="entry name" value="AB_hydrolase_fold"/>
</dbReference>
<dbReference type="InterPro" id="IPR036736">
    <property type="entry name" value="ACP-like_sf"/>
</dbReference>
<dbReference type="InterPro" id="IPR025110">
    <property type="entry name" value="AMP-bd_C"/>
</dbReference>
<dbReference type="InterPro" id="IPR045851">
    <property type="entry name" value="AMP-bd_C_sf"/>
</dbReference>
<dbReference type="InterPro" id="IPR020845">
    <property type="entry name" value="AMP-binding_CS"/>
</dbReference>
<dbReference type="InterPro" id="IPR000873">
    <property type="entry name" value="AMP-dep_synth/lig_dom"/>
</dbReference>
<dbReference type="InterPro" id="IPR042099">
    <property type="entry name" value="ANL_N_sf"/>
</dbReference>
<dbReference type="InterPro" id="IPR023213">
    <property type="entry name" value="CAT-like_dom_sf"/>
</dbReference>
<dbReference type="InterPro" id="IPR001242">
    <property type="entry name" value="Condensatn"/>
</dbReference>
<dbReference type="InterPro" id="IPR020806">
    <property type="entry name" value="PKS_PP-bd"/>
</dbReference>
<dbReference type="InterPro" id="IPR009081">
    <property type="entry name" value="PP-bd_ACP"/>
</dbReference>
<dbReference type="InterPro" id="IPR006162">
    <property type="entry name" value="Ppantetheine_attach_site"/>
</dbReference>
<dbReference type="InterPro" id="IPR001031">
    <property type="entry name" value="Thioesterase"/>
</dbReference>
<dbReference type="NCBIfam" id="TIGR01733">
    <property type="entry name" value="AA-adenyl-dom"/>
    <property type="match status" value="3"/>
</dbReference>
<dbReference type="NCBIfam" id="NF003417">
    <property type="entry name" value="PRK04813.1"/>
    <property type="match status" value="3"/>
</dbReference>
<dbReference type="PANTHER" id="PTHR45527:SF1">
    <property type="entry name" value="FATTY ACID SYNTHASE"/>
    <property type="match status" value="1"/>
</dbReference>
<dbReference type="PANTHER" id="PTHR45527">
    <property type="entry name" value="NONRIBOSOMAL PEPTIDE SYNTHETASE"/>
    <property type="match status" value="1"/>
</dbReference>
<dbReference type="Pfam" id="PF00501">
    <property type="entry name" value="AMP-binding"/>
    <property type="match status" value="3"/>
</dbReference>
<dbReference type="Pfam" id="PF13193">
    <property type="entry name" value="AMP-binding_C"/>
    <property type="match status" value="3"/>
</dbReference>
<dbReference type="Pfam" id="PF00668">
    <property type="entry name" value="Condensation"/>
    <property type="match status" value="3"/>
</dbReference>
<dbReference type="Pfam" id="PF00550">
    <property type="entry name" value="PP-binding"/>
    <property type="match status" value="3"/>
</dbReference>
<dbReference type="Pfam" id="PF00975">
    <property type="entry name" value="Thioesterase"/>
    <property type="match status" value="1"/>
</dbReference>
<dbReference type="SMART" id="SM00823">
    <property type="entry name" value="PKS_PP"/>
    <property type="match status" value="3"/>
</dbReference>
<dbReference type="SMART" id="SM01294">
    <property type="entry name" value="PKS_PP_betabranch"/>
    <property type="match status" value="1"/>
</dbReference>
<dbReference type="SUPFAM" id="SSF56801">
    <property type="entry name" value="Acetyl-CoA synthetase-like"/>
    <property type="match status" value="3"/>
</dbReference>
<dbReference type="SUPFAM" id="SSF47336">
    <property type="entry name" value="ACP-like"/>
    <property type="match status" value="3"/>
</dbReference>
<dbReference type="SUPFAM" id="SSF53474">
    <property type="entry name" value="alpha/beta-Hydrolases"/>
    <property type="match status" value="1"/>
</dbReference>
<dbReference type="SUPFAM" id="SSF52777">
    <property type="entry name" value="CoA-dependent acyltransferases"/>
    <property type="match status" value="6"/>
</dbReference>
<dbReference type="PROSITE" id="PS00455">
    <property type="entry name" value="AMP_BINDING"/>
    <property type="match status" value="1"/>
</dbReference>
<dbReference type="PROSITE" id="PS50075">
    <property type="entry name" value="CARRIER"/>
    <property type="match status" value="3"/>
</dbReference>
<dbReference type="PROSITE" id="PS00012">
    <property type="entry name" value="PHOSPHOPANTETHEINE"/>
    <property type="match status" value="2"/>
</dbReference>
<gene>
    <name type="primary">pcbAB</name>
</gene>
<sequence>MTSARHLKSAADWCARIDAIAGQRCDLEMLLKDEWRHRVAVRDSDTAVRATQEKELTISGQDYTALKQALGAMPLEAFALATLHSVLHAYGHGHQTVVAFLRDGKVLPVVVDHLEQAGLTCAEAAEQLEDAVAREDMYLPPEELLQRGLFDALLVLADGHLGFTELPPAPLVTIVRDDPAAGCLHWRIAYAGEFFEDKIIAGVLDVAREVLGQFIGRPEQLVADIDLVSAEQELQLHQWNGTDGEFDEDKRLNELFEDVVRRAPDREAVVCGDVRLTYREVNERANQFAHWLIQGPVRVRPGALIGLYLDKSDLGVVATFGIWKSGAAYVPIDPAYPAERIRFLVGDTGLSGIVTNRRHAERLREVLGDEHASVHVIEVEAVVAGPHPEQARENPGLALSSRDRAYVTYTSGTTGVPKGVPKYHYSVVNSITDLSERYDMRRPGTERVALFASYVFEPHLRQTLIALINEQTLVIVPDDVRLDPDLFPEYIERHGVTYLNATGSVLQHFDLRRCASLKRLLLVGEELTASGLRQLREKFAGRVVNEYAFTEAAFVTAVKEFGPGVTERRDRSIGRPLRNVKWYVLSQGLKQLPIGAIGELYIGGCGVAPGYLNRDDLTAERFTANPFQTEEEKARGRNGRLYRTGDLARVLLNGEVEFMGRADFQLKLNGVRVEPGEIEAQATEFPGVKKCVVVAKENATGDRHLVGYYLVEDGAEVAEADLIAFLEQRLIRIMVPARMVRLTSIPVNVNGKVDWRALPDVSLHPAPANAMNGALLAIDGSNAPLLAITEQLRAIWSEVLGVPQNRIGERDDFFRLGGQSISCILLIARVRQRLSLSLGVEDVFALRTLDALAGHLESQGHAEPEVVAEEVTTGSEPVRVLANGLQQGLLYHHLKTAGGDDAYVVQSVHRYHAPIRPELMKDAWQAARQTYPALRLRFDWAEEPVQIVDNDDKPFDWRFVDLSATADDAEQEARVRELQERDRTEPYDLAGGRLFRVYLIKQREDLFSLIFSCHHIILDGWSLPVLHDEVHRNYLALRAGQPIESDVDNAYVAAQRYWEAHRNDHAAYWVEQLGRIDERGDFAGLLNEKSRYRVSLGDYDHVQRHRTRKLYLGADLTGALKAGCAADQVTLHSVLQFVWHKVLHAIGGGNTTVVGTIVSGRNLPVDGIENSAGLFINTLPLIVDHDQQAGQNVAEAVRDIQAAVNTMNSKSIVELGRLQSGEMKRRLFDTLLVLENYPRLLDEEEELAHQEALRFEKAYDADKVDYPIAVVAREEGDELTVTLWYAGELFDEDTIDTLLDVARTLFRQVTEDIARPVRELDLISPSMRARFDSWNETAEEFPADKTLHAVFEEMAERWPDEIAVVYRENRLTYRELNERANRLAHYLRSVVELRPDDLVALVLDKSELMITAIIAAWKTGAAYVPIDSGYPDDRISFMLSDTAARVVVTNEIHSDRLRSLAETGTPVLEIELLHLDDQPAVNPVTETTSTDLAYAIYTSGTTGKPKAVLVEHRGVVNLQVSLAKLFGLDKAHRDEALLSFSNYIFDHFVEQMTDALLNGQKLVVLDDSMRTDPGRLCRYMNDEQVTYLSGTPSVLSLYDYSSATSLTRIDAIGEDFTEPVFAKIRGTFPGLIINGYGPTEISITSHKRPYPPDVHRVNKSIGFPVANTKCHVLNKAMKPVPVGGIGELYIGGIGVTRGYLNREDLTADRFVENPFQTAEERRLGENGRLYKTGDLVRWLPNGEVEYLGRTDLQVKIRGQRVELGEVEAALSSYPGVVRSLVVAREHAVGQKYLVGFYVGEQEFDEQDLKQWMRKKLPESVVPARVLRITDIPVTPSGKLDARRLPETDFGAGEGAEYVAPVSEFELKLCGIWAQVLEIAPDRIGVHDDFFALGGDSIRAMALAQAITTGFGQGLGVATVLQHTTLAAQAEHIQAAALEHTAWTPPPTAVEHPPVSLAQERLLFIDDFEGGTAAYNIPFVLRLPAHTRAALPGALGTLVRRHPALRTLLKTDDQGVRRQYPIPADDVRLEVPSTTVDSRAELDEVLTERAGYVFRLHEELPIRAEAFDHGDEIYLSVVVHHSCFDGWSWDIFRRELAALLDGVPEADLGALRGTYGEFAVWQRQYLTGKRLAALTEFWTGALGGFETIALPLDHPRPPRFDYRGRELEFELDERTTEALRELARTARVSLYSVLLGAWCLMLNMYTGQHDLVVGTPSANRGRPEFDRAVGFFANLLALRVRVDPAATLPAYVRSVGEAVVAAQVHGELPFEQLVKELKVEKDPSRHPILQLNFTLQNVSDHTSALTGYQPDSGGWTTTKFDLSATMTETATGLAGNLTYAASLFDDTSASGFIATFKHVLAEFASAAAQTPIAQLTALDEPGQAALPDATRRARRPGGPGRCTRLFEEVAATWPDRVAVVHGDVRLTYRELNERANRLAHHLRSVAEPRADELIALVLDKSELTLVAILAVWKAGAAYMPIDPSYPDDRIAFMLSDTGAKLVLAGEAHGSRVRGLTSGDVLDLEQLDLTGEPAENPVTETTSTELAYAIYTSGTTGKPKAVLVSHGSVDSFRAQLSGRYFGSPDESAEAVLFLANYVFDFSVEQLALSVLGGHKLLVPPPSAADDPAFYELANREGLSYLSGTPTQVERFDLARLSHLRCVLVAGEAFQPQHFEKMRGEFAGPILNAYGTTETTVYNTVHRFEPGDAYRNTLGAPLGNTRLYVLGDGMKLLPTGAVGELYLAGDCVTEGYLHRPELTRERFLPNPFAAESGRFPMIYRTGDVVRRGPDGELQYLGRNDAQVKINGLRIEPGEVEAALAGCSGVRQCAVVAGADPQAPERKRLVGYYLPEPGAAVDEADLFAALRAQLMPSMVPSLLVRLDRPLPMTITGKLDVDALPSADFSPKRAAYAAPRDRVEARLCHLWSAQLPGGTVGIDDDFFRCGGDSISALHLASQVQREIERKVSVKYLFDHPTVRSFVDNVLSGLAESSGDDEPEQGRLTGECPMLPIQEWFFAKPLADRHRWNHNFAIRTPPLDPGELRTALDRLVEHHDAFRLRFPESGGEVYAEDAAPITLHELDVRGLADADLRQRLVDWQRTFDLANGPTACAAYLHGFDDGTARVWFALHHLVVDTVSWHILAQDLEILYNGGDLGAKTGSYRQWAQAVRDYTPAEGEREFWAETTRDMESAELLAQTEGTTRRREEFALTAPDTRTLLAESPWAYDTEVNDLLLTATGFALRSITRQATNHLTVEGHGRELFEGAPDVRDTVGWFTTMHPFAVEVDPGDLGRSVLATRANRRRVPHHGIGYGALFGGEAPLPAVSFNYLGRLGEGDGQPTEAWQLDPALSGSHTVDGNRLANRSSIDVTMSCTGGRLVAVVDSLLGEAATRLFASELKVWLERLVSHTATVARNEPAREATTELFDPYILVNEDAERTLFVLPPGEGGAESYLSNLARQLPDLRLVLFNNVHLHTPMGSFEELGRYYVEHIRRLQPSGPYHLLGWSFGGVLSLEISRQLARAGERIDDLLLIDPYFGMRQASANIGLPGVEDILDPINYHYRPDEADLARLAGRLGNLVLFKAGEPNDVVNGPHQPRLFEYYHGTRFNHLDLLLPAAAIEVCDLAGETHHSWVRNEKLVRLMCERISTSLGSD</sequence>
<protein>
    <recommendedName>
        <fullName>N-(5-amino-5-carboxypentanoyl)-L-cysteinyl-D-valine synthase</fullName>
        <ecNumber>6.3.2.26</ecNumber>
    </recommendedName>
    <alternativeName>
        <fullName>Delta-(L-alpha-aminoadipyl)-L-cysteinyl-D-valine synthetase</fullName>
        <shortName>ACV synthetase</shortName>
        <shortName>ACVS</shortName>
    </alternativeName>
</protein>
<organism>
    <name type="scientific">Amycolatopsis lactamdurans</name>
    <name type="common">Nocardia lactamdurans</name>
    <dbReference type="NCBI Taxonomy" id="1913"/>
    <lineage>
        <taxon>Bacteria</taxon>
        <taxon>Bacillati</taxon>
        <taxon>Actinomycetota</taxon>
        <taxon>Actinomycetes</taxon>
        <taxon>Pseudonocardiales</taxon>
        <taxon>Pseudonocardiaceae</taxon>
        <taxon>Amycolatopsis</taxon>
    </lineage>
</organism>
<proteinExistence type="inferred from homology"/>
<name>ACVS_AMYLA</name>
<keyword id="KW-0045">Antibiotic biosynthesis</keyword>
<keyword id="KW-0067">ATP-binding</keyword>
<keyword id="KW-0436">Ligase</keyword>
<keyword id="KW-0511">Multifunctional enzyme</keyword>
<keyword id="KW-0547">Nucleotide-binding</keyword>
<keyword id="KW-0596">Phosphopantetheine</keyword>
<keyword id="KW-0597">Phosphoprotein</keyword>
<keyword id="KW-0677">Repeat</keyword>
<comment type="function">
    <text>Each of the constituent amino acids of the tripeptide acv are activated as aminoacyl-adenylates with peptide bonds formed through the participation of amino acid thioester intermediates.</text>
</comment>
<comment type="catalytic activity">
    <reaction>
        <text>L-2-aminoadipate + L-valine + L-cysteine + 3 ATP + H2O = N-[(5S)-5-amino-5-carboxypentanoyl]-L-cysteinyl-D-valine + 3 AMP + 3 diphosphate + 3 H(+)</text>
        <dbReference type="Rhea" id="RHEA:23196"/>
        <dbReference type="ChEBI" id="CHEBI:15377"/>
        <dbReference type="ChEBI" id="CHEBI:15378"/>
        <dbReference type="ChEBI" id="CHEBI:30616"/>
        <dbReference type="ChEBI" id="CHEBI:33019"/>
        <dbReference type="ChEBI" id="CHEBI:35235"/>
        <dbReference type="ChEBI" id="CHEBI:57762"/>
        <dbReference type="ChEBI" id="CHEBI:58572"/>
        <dbReference type="ChEBI" id="CHEBI:58672"/>
        <dbReference type="ChEBI" id="CHEBI:456215"/>
        <dbReference type="EC" id="6.3.2.26"/>
    </reaction>
</comment>
<comment type="cofactor">
    <cofactor>
        <name>pantetheine 4'-phosphate</name>
        <dbReference type="ChEBI" id="CHEBI:47942"/>
    </cofactor>
    <text>Binds 3 phosphopantetheines covalently.</text>
</comment>
<comment type="pathway">
    <text>Antibiotic biosynthesis; penicillin G biosynthesis; penicillin G from L-alpha-aminoadipate and L-cysteine and L-valine: step 1/3.</text>
</comment>
<comment type="similarity">
    <text evidence="3">Belongs to the ATP-dependent AMP-binding enzyme family.</text>
</comment>